<protein>
    <recommendedName>
        <fullName evidence="1">UDP-N-acetylglucosamine--N-acetylmuramyl-(pentapeptide) pyrophosphoryl-undecaprenol N-acetylglucosamine transferase</fullName>
        <ecNumber evidence="1">2.4.1.227</ecNumber>
    </recommendedName>
    <alternativeName>
        <fullName evidence="1">Undecaprenyl-PP-MurNAc-pentapeptide-UDPGlcNAc GlcNAc transferase</fullName>
    </alternativeName>
</protein>
<name>MURG_PHOV8</name>
<reference key="1">
    <citation type="journal article" date="2007" name="PLoS Biol.">
        <title>Evolution of symbiotic bacteria in the distal human intestine.</title>
        <authorList>
            <person name="Xu J."/>
            <person name="Mahowald M.A."/>
            <person name="Ley R.E."/>
            <person name="Lozupone C.A."/>
            <person name="Hamady M."/>
            <person name="Martens E.C."/>
            <person name="Henrissat B."/>
            <person name="Coutinho P.M."/>
            <person name="Minx P."/>
            <person name="Latreille P."/>
            <person name="Cordum H."/>
            <person name="Van Brunt A."/>
            <person name="Kim K."/>
            <person name="Fulton R.S."/>
            <person name="Fulton L.A."/>
            <person name="Clifton S.W."/>
            <person name="Wilson R.K."/>
            <person name="Knight R.D."/>
            <person name="Gordon J.I."/>
        </authorList>
    </citation>
    <scope>NUCLEOTIDE SEQUENCE [LARGE SCALE GENOMIC DNA]</scope>
    <source>
        <strain>ATCC 8482 / DSM 1447 / JCM 5826 / CCUG 4940 / NBRC 14291 / NCTC 11154</strain>
    </source>
</reference>
<comment type="function">
    <text evidence="1">Cell wall formation. Catalyzes the transfer of a GlcNAc subunit on undecaprenyl-pyrophosphoryl-MurNAc-pentapeptide (lipid intermediate I) to form undecaprenyl-pyrophosphoryl-MurNAc-(pentapeptide)GlcNAc (lipid intermediate II).</text>
</comment>
<comment type="catalytic activity">
    <reaction evidence="1">
        <text>di-trans,octa-cis-undecaprenyl diphospho-N-acetyl-alpha-D-muramoyl-L-alanyl-D-glutamyl-meso-2,6-diaminopimeloyl-D-alanyl-D-alanine + UDP-N-acetyl-alpha-D-glucosamine = di-trans,octa-cis-undecaprenyl diphospho-[N-acetyl-alpha-D-glucosaminyl-(1-&gt;4)]-N-acetyl-alpha-D-muramoyl-L-alanyl-D-glutamyl-meso-2,6-diaminopimeloyl-D-alanyl-D-alanine + UDP + H(+)</text>
        <dbReference type="Rhea" id="RHEA:31227"/>
        <dbReference type="ChEBI" id="CHEBI:15378"/>
        <dbReference type="ChEBI" id="CHEBI:57705"/>
        <dbReference type="ChEBI" id="CHEBI:58223"/>
        <dbReference type="ChEBI" id="CHEBI:61387"/>
        <dbReference type="ChEBI" id="CHEBI:61388"/>
        <dbReference type="EC" id="2.4.1.227"/>
    </reaction>
</comment>
<comment type="pathway">
    <text evidence="1">Cell wall biogenesis; peptidoglycan biosynthesis.</text>
</comment>
<comment type="subcellular location">
    <subcellularLocation>
        <location evidence="1">Cell inner membrane</location>
        <topology evidence="1">Peripheral membrane protein</topology>
        <orientation evidence="1">Cytoplasmic side</orientation>
    </subcellularLocation>
</comment>
<comment type="similarity">
    <text evidence="1">Belongs to the glycosyltransferase 28 family. MurG subfamily.</text>
</comment>
<sequence length="376" mass="40464">MEENLRIIISGGGTGGHIFPAVSIANAIKEQHPEAEILFVGAEGRMEMQRVPAAGYPIKGLPVAGFDRKNLLKNVSVLFKLVKSQLLARKIIKDFKPHAAVGVGGYASGPTLKMAGMMGIPTLIQEQNSYAGVTNKLLAKKACKICVAYDGMERFFEKDKIILTGNPVRQGLRNHHISREEAIRSFGLDPSKKTILIVGGSLGARTINNCVMEGLDKIKASGAQFIWQTGKIYIGEARAAVAQAGELPMLHVTDFISDMAAAYSAADLIISRAGAGSISEFCLLQKPVILVPSPNVAEDHQTKNALALVNKNAALYIKDAAAKEALLDKAVETVKQPETLKSLSTNIAKLAFTDSANVIAREVFKLADKYRKENGR</sequence>
<accession>A6L071</accession>
<organism>
    <name type="scientific">Phocaeicola vulgatus (strain ATCC 8482 / DSM 1447 / JCM 5826 / CCUG 4940 / NBRC 14291 / NCTC 11154)</name>
    <name type="common">Bacteroides vulgatus</name>
    <dbReference type="NCBI Taxonomy" id="435590"/>
    <lineage>
        <taxon>Bacteria</taxon>
        <taxon>Pseudomonadati</taxon>
        <taxon>Bacteroidota</taxon>
        <taxon>Bacteroidia</taxon>
        <taxon>Bacteroidales</taxon>
        <taxon>Bacteroidaceae</taxon>
        <taxon>Phocaeicola</taxon>
    </lineage>
</organism>
<evidence type="ECO:0000255" key="1">
    <source>
        <dbReference type="HAMAP-Rule" id="MF_00033"/>
    </source>
</evidence>
<keyword id="KW-0131">Cell cycle</keyword>
<keyword id="KW-0132">Cell division</keyword>
<keyword id="KW-0997">Cell inner membrane</keyword>
<keyword id="KW-1003">Cell membrane</keyword>
<keyword id="KW-0133">Cell shape</keyword>
<keyword id="KW-0961">Cell wall biogenesis/degradation</keyword>
<keyword id="KW-0328">Glycosyltransferase</keyword>
<keyword id="KW-0472">Membrane</keyword>
<keyword id="KW-0573">Peptidoglycan synthesis</keyword>
<keyword id="KW-0808">Transferase</keyword>
<feature type="chain" id="PRO_1000002618" description="UDP-N-acetylglucosamine--N-acetylmuramyl-(pentapeptide) pyrophosphoryl-undecaprenol N-acetylglucosamine transferase">
    <location>
        <begin position="1"/>
        <end position="376"/>
    </location>
</feature>
<feature type="binding site" evidence="1">
    <location>
        <begin position="14"/>
        <end position="16"/>
    </location>
    <ligand>
        <name>UDP-N-acetyl-alpha-D-glucosamine</name>
        <dbReference type="ChEBI" id="CHEBI:57705"/>
    </ligand>
</feature>
<feature type="binding site" evidence="1">
    <location>
        <position position="128"/>
    </location>
    <ligand>
        <name>UDP-N-acetyl-alpha-D-glucosamine</name>
        <dbReference type="ChEBI" id="CHEBI:57705"/>
    </ligand>
</feature>
<feature type="binding site" evidence="1">
    <location>
        <position position="169"/>
    </location>
    <ligand>
        <name>UDP-N-acetyl-alpha-D-glucosamine</name>
        <dbReference type="ChEBI" id="CHEBI:57705"/>
    </ligand>
</feature>
<feature type="binding site" evidence="1">
    <location>
        <position position="201"/>
    </location>
    <ligand>
        <name>UDP-N-acetyl-alpha-D-glucosamine</name>
        <dbReference type="ChEBI" id="CHEBI:57705"/>
    </ligand>
</feature>
<feature type="binding site" evidence="1">
    <location>
        <position position="256"/>
    </location>
    <ligand>
        <name>UDP-N-acetyl-alpha-D-glucosamine</name>
        <dbReference type="ChEBI" id="CHEBI:57705"/>
    </ligand>
</feature>
<feature type="binding site" evidence="1">
    <location>
        <position position="301"/>
    </location>
    <ligand>
        <name>UDP-N-acetyl-alpha-D-glucosamine</name>
        <dbReference type="ChEBI" id="CHEBI:57705"/>
    </ligand>
</feature>
<proteinExistence type="inferred from homology"/>
<dbReference type="EC" id="2.4.1.227" evidence="1"/>
<dbReference type="EMBL" id="CP000139">
    <property type="protein sequence ID" value="ABR39085.1"/>
    <property type="molecule type" value="Genomic_DNA"/>
</dbReference>
<dbReference type="RefSeq" id="WP_005845311.1">
    <property type="nucleotide sequence ID" value="NZ_CAXVNH010000035.1"/>
</dbReference>
<dbReference type="SMR" id="A6L071"/>
<dbReference type="STRING" id="435590.BVU_1397"/>
<dbReference type="CAZy" id="GT28">
    <property type="family name" value="Glycosyltransferase Family 28"/>
</dbReference>
<dbReference type="PaxDb" id="435590-BVU_1397"/>
<dbReference type="GeneID" id="5302363"/>
<dbReference type="KEGG" id="bvu:BVU_1397"/>
<dbReference type="eggNOG" id="COG0707">
    <property type="taxonomic scope" value="Bacteria"/>
</dbReference>
<dbReference type="HOGENOM" id="CLU_037404_0_1_10"/>
<dbReference type="BioCyc" id="BVUL435590:G1G59-1460-MONOMER"/>
<dbReference type="UniPathway" id="UPA00219"/>
<dbReference type="Proteomes" id="UP000002861">
    <property type="component" value="Chromosome"/>
</dbReference>
<dbReference type="GO" id="GO:0005886">
    <property type="term" value="C:plasma membrane"/>
    <property type="evidence" value="ECO:0007669"/>
    <property type="project" value="UniProtKB-SubCell"/>
</dbReference>
<dbReference type="GO" id="GO:0051991">
    <property type="term" value="F:UDP-N-acetyl-D-glucosamine:N-acetylmuramoyl-L-alanyl-D-glutamyl-meso-2,6-diaminopimelyl-D-alanyl-D-alanine-diphosphoundecaprenol 4-beta-N-acetylglucosaminlytransferase activity"/>
    <property type="evidence" value="ECO:0007669"/>
    <property type="project" value="RHEA"/>
</dbReference>
<dbReference type="GO" id="GO:0050511">
    <property type="term" value="F:undecaprenyldiphospho-muramoylpentapeptide beta-N-acetylglucosaminyltransferase activity"/>
    <property type="evidence" value="ECO:0007669"/>
    <property type="project" value="UniProtKB-UniRule"/>
</dbReference>
<dbReference type="GO" id="GO:0005975">
    <property type="term" value="P:carbohydrate metabolic process"/>
    <property type="evidence" value="ECO:0007669"/>
    <property type="project" value="InterPro"/>
</dbReference>
<dbReference type="GO" id="GO:0051301">
    <property type="term" value="P:cell division"/>
    <property type="evidence" value="ECO:0007669"/>
    <property type="project" value="UniProtKB-KW"/>
</dbReference>
<dbReference type="GO" id="GO:0071555">
    <property type="term" value="P:cell wall organization"/>
    <property type="evidence" value="ECO:0007669"/>
    <property type="project" value="UniProtKB-KW"/>
</dbReference>
<dbReference type="GO" id="GO:0030259">
    <property type="term" value="P:lipid glycosylation"/>
    <property type="evidence" value="ECO:0007669"/>
    <property type="project" value="UniProtKB-UniRule"/>
</dbReference>
<dbReference type="GO" id="GO:0009252">
    <property type="term" value="P:peptidoglycan biosynthetic process"/>
    <property type="evidence" value="ECO:0007669"/>
    <property type="project" value="UniProtKB-UniRule"/>
</dbReference>
<dbReference type="GO" id="GO:0008360">
    <property type="term" value="P:regulation of cell shape"/>
    <property type="evidence" value="ECO:0007669"/>
    <property type="project" value="UniProtKB-KW"/>
</dbReference>
<dbReference type="CDD" id="cd03785">
    <property type="entry name" value="GT28_MurG"/>
    <property type="match status" value="1"/>
</dbReference>
<dbReference type="Gene3D" id="3.40.50.2000">
    <property type="entry name" value="Glycogen Phosphorylase B"/>
    <property type="match status" value="2"/>
</dbReference>
<dbReference type="HAMAP" id="MF_00033">
    <property type="entry name" value="MurG"/>
    <property type="match status" value="1"/>
</dbReference>
<dbReference type="InterPro" id="IPR006009">
    <property type="entry name" value="GlcNAc_MurG"/>
</dbReference>
<dbReference type="InterPro" id="IPR007235">
    <property type="entry name" value="Glyco_trans_28_C"/>
</dbReference>
<dbReference type="InterPro" id="IPR004276">
    <property type="entry name" value="GlycoTrans_28_N"/>
</dbReference>
<dbReference type="NCBIfam" id="TIGR01133">
    <property type="entry name" value="murG"/>
    <property type="match status" value="1"/>
</dbReference>
<dbReference type="PANTHER" id="PTHR21015:SF22">
    <property type="entry name" value="GLYCOSYLTRANSFERASE"/>
    <property type="match status" value="1"/>
</dbReference>
<dbReference type="PANTHER" id="PTHR21015">
    <property type="entry name" value="UDP-N-ACETYLGLUCOSAMINE--N-ACETYLMURAMYL-(PENTAPEPTIDE) PYROPHOSPHORYL-UNDECAPRENOL N-ACETYLGLUCOSAMINE TRANSFERASE 1"/>
    <property type="match status" value="1"/>
</dbReference>
<dbReference type="Pfam" id="PF04101">
    <property type="entry name" value="Glyco_tran_28_C"/>
    <property type="match status" value="1"/>
</dbReference>
<dbReference type="Pfam" id="PF03033">
    <property type="entry name" value="Glyco_transf_28"/>
    <property type="match status" value="1"/>
</dbReference>
<dbReference type="SUPFAM" id="SSF53756">
    <property type="entry name" value="UDP-Glycosyltransferase/glycogen phosphorylase"/>
    <property type="match status" value="1"/>
</dbReference>
<gene>
    <name evidence="1" type="primary">murG</name>
    <name type="ordered locus">BVU_1397</name>
</gene>